<reference key="1">
    <citation type="journal article" date="2000" name="Proc. Natl. Acad. Sci. U.S.A.">
        <title>Genome sequence of Halobacterium species NRC-1.</title>
        <authorList>
            <person name="Ng W.V."/>
            <person name="Kennedy S.P."/>
            <person name="Mahairas G.G."/>
            <person name="Berquist B."/>
            <person name="Pan M."/>
            <person name="Shukla H.D."/>
            <person name="Lasky S.R."/>
            <person name="Baliga N.S."/>
            <person name="Thorsson V."/>
            <person name="Sbrogna J."/>
            <person name="Swartzell S."/>
            <person name="Weir D."/>
            <person name="Hall J."/>
            <person name="Dahl T.A."/>
            <person name="Welti R."/>
            <person name="Goo Y.A."/>
            <person name="Leithauser B."/>
            <person name="Keller K."/>
            <person name="Cruz R."/>
            <person name="Danson M.J."/>
            <person name="Hough D.W."/>
            <person name="Maddocks D.G."/>
            <person name="Jablonski P.E."/>
            <person name="Krebs M.P."/>
            <person name="Angevine C.M."/>
            <person name="Dale H."/>
            <person name="Isenbarger T.A."/>
            <person name="Peck R.F."/>
            <person name="Pohlschroder M."/>
            <person name="Spudich J.L."/>
            <person name="Jung K.-H."/>
            <person name="Alam M."/>
            <person name="Freitas T."/>
            <person name="Hou S."/>
            <person name="Daniels C.J."/>
            <person name="Dennis P.P."/>
            <person name="Omer A.D."/>
            <person name="Ebhardt H."/>
            <person name="Lowe T.M."/>
            <person name="Liang P."/>
            <person name="Riley M."/>
            <person name="Hood L."/>
            <person name="DasSarma S."/>
        </authorList>
    </citation>
    <scope>NUCLEOTIDE SEQUENCE [LARGE SCALE GENOMIC DNA]</scope>
    <source>
        <strain>ATCC 700922 / JCM 11081 / NRC-1</strain>
    </source>
</reference>
<sequence>MQSHPEVAVLRYGHRPGRDDRMTTHVGLTARALGADRVLFPDNATQAAETVRDITGRFGGPFDVERTTELNATIEDWPGVVVHLTMYGEQLQSVDDEIRTTHREEPVLVVVGGEKVPGDVYEAADWNVGVTNQPHSEVAGLAVFLDRLFDGRELEQGYENAERRVIPEELGKHVVDVEDGDHAEGAAAGDGD</sequence>
<evidence type="ECO:0000255" key="1">
    <source>
        <dbReference type="HAMAP-Rule" id="MF_00077"/>
    </source>
</evidence>
<evidence type="ECO:0000305" key="2"/>
<name>TRM56_HALSA</name>
<gene>
    <name type="ordered locus">VNG_0755C</name>
</gene>
<protein>
    <recommendedName>
        <fullName evidence="1">tRNA (cytidine(56)-2'-O)-methyltransferase</fullName>
        <ecNumber evidence="1">2.1.1.206</ecNumber>
    </recommendedName>
    <alternativeName>
        <fullName evidence="1">tRNA ribose 2'-O-methyltransferase aTrm56</fullName>
    </alternativeName>
</protein>
<proteinExistence type="inferred from homology"/>
<feature type="chain" id="PRO_0000146927" description="tRNA (cytidine(56)-2'-O)-methyltransferase">
    <location>
        <begin position="1"/>
        <end position="192"/>
    </location>
</feature>
<feature type="binding site" evidence="1">
    <location>
        <position position="84"/>
    </location>
    <ligand>
        <name>S-adenosyl-L-methionine</name>
        <dbReference type="ChEBI" id="CHEBI:59789"/>
    </ligand>
</feature>
<feature type="binding site" evidence="1">
    <location>
        <begin position="112"/>
        <end position="116"/>
    </location>
    <ligand>
        <name>S-adenosyl-L-methionine</name>
        <dbReference type="ChEBI" id="CHEBI:59789"/>
    </ligand>
</feature>
<accession>Q9HRC8</accession>
<comment type="function">
    <text evidence="1">Specifically catalyzes the AdoMet-dependent 2'-O-ribose methylation of cytidine at position 56 in tRNAs.</text>
</comment>
<comment type="catalytic activity">
    <reaction evidence="1">
        <text>cytidine(56) in tRNA + S-adenosyl-L-methionine = 2'-O-methylcytidine(56) in tRNA + S-adenosyl-L-homocysteine + H(+)</text>
        <dbReference type="Rhea" id="RHEA:42968"/>
        <dbReference type="Rhea" id="RHEA-COMP:10308"/>
        <dbReference type="Rhea" id="RHEA-COMP:10309"/>
        <dbReference type="ChEBI" id="CHEBI:15378"/>
        <dbReference type="ChEBI" id="CHEBI:57856"/>
        <dbReference type="ChEBI" id="CHEBI:59789"/>
        <dbReference type="ChEBI" id="CHEBI:74495"/>
        <dbReference type="ChEBI" id="CHEBI:82748"/>
        <dbReference type="EC" id="2.1.1.206"/>
    </reaction>
</comment>
<comment type="subunit">
    <text evidence="1">Homodimer.</text>
</comment>
<comment type="subcellular location">
    <subcellularLocation>
        <location evidence="1">Cytoplasm</location>
    </subcellularLocation>
</comment>
<comment type="similarity">
    <text evidence="1">Belongs to the aTrm56 family.</text>
</comment>
<comment type="sequence caution" evidence="2">
    <conflict type="erroneous initiation">
        <sequence resource="EMBL-CDS" id="AAG19230"/>
    </conflict>
</comment>
<dbReference type="EC" id="2.1.1.206" evidence="1"/>
<dbReference type="EMBL" id="AE004437">
    <property type="protein sequence ID" value="AAG19230.1"/>
    <property type="status" value="ALT_INIT"/>
    <property type="molecule type" value="Genomic_DNA"/>
</dbReference>
<dbReference type="PIR" id="B84233">
    <property type="entry name" value="B84233"/>
</dbReference>
<dbReference type="RefSeq" id="WP_012289218.1">
    <property type="nucleotide sequence ID" value="NC_002607.1"/>
</dbReference>
<dbReference type="SMR" id="Q9HRC8"/>
<dbReference type="FunCoup" id="Q9HRC8">
    <property type="interactions" value="3"/>
</dbReference>
<dbReference type="STRING" id="64091.VNG_0755C"/>
<dbReference type="PaxDb" id="64091-VNG_0755C"/>
<dbReference type="KEGG" id="hal:VNG_0755C"/>
<dbReference type="PATRIC" id="fig|64091.14.peg.580"/>
<dbReference type="HOGENOM" id="CLU_123709_0_0_2"/>
<dbReference type="InParanoid" id="Q9HRC8"/>
<dbReference type="OrthoDB" id="14397at2157"/>
<dbReference type="PhylomeDB" id="Q9HRC8"/>
<dbReference type="Proteomes" id="UP000000554">
    <property type="component" value="Chromosome"/>
</dbReference>
<dbReference type="GO" id="GO:0005737">
    <property type="term" value="C:cytoplasm"/>
    <property type="evidence" value="ECO:0007669"/>
    <property type="project" value="UniProtKB-SubCell"/>
</dbReference>
<dbReference type="GO" id="GO:0106059">
    <property type="term" value="F:tRNA (cytidine(56)-2'-O)-methyltransferase activity"/>
    <property type="evidence" value="ECO:0007669"/>
    <property type="project" value="UniProtKB-EC"/>
</dbReference>
<dbReference type="GO" id="GO:0002128">
    <property type="term" value="P:tRNA nucleoside ribose methylation"/>
    <property type="evidence" value="ECO:0007669"/>
    <property type="project" value="UniProtKB-UniRule"/>
</dbReference>
<dbReference type="Gene3D" id="3.40.1280.10">
    <property type="match status" value="1"/>
</dbReference>
<dbReference type="HAMAP" id="MF_00077">
    <property type="entry name" value="tRNA_methyltr_aTrm56"/>
    <property type="match status" value="1"/>
</dbReference>
<dbReference type="InterPro" id="IPR029028">
    <property type="entry name" value="Alpha/beta_knot_MTases"/>
</dbReference>
<dbReference type="InterPro" id="IPR029026">
    <property type="entry name" value="tRNA_m1G_MTases_N"/>
</dbReference>
<dbReference type="InterPro" id="IPR002845">
    <property type="entry name" value="tRNA_mtfrase_aTrm56"/>
</dbReference>
<dbReference type="NCBIfam" id="NF003048">
    <property type="entry name" value="PRK03958.1"/>
    <property type="match status" value="1"/>
</dbReference>
<dbReference type="PANTHER" id="PTHR42197">
    <property type="entry name" value="TRNA (CYTIDINE(56)-2'-O)-METHYLTRANSFERASE"/>
    <property type="match status" value="1"/>
</dbReference>
<dbReference type="PANTHER" id="PTHR42197:SF1">
    <property type="entry name" value="TRNA (CYTIDINE(56)-2'-O)-METHYLTRANSFERASE"/>
    <property type="match status" value="1"/>
</dbReference>
<dbReference type="Pfam" id="PF01994">
    <property type="entry name" value="Trm56"/>
    <property type="match status" value="1"/>
</dbReference>
<dbReference type="PIRSF" id="PIRSF016123">
    <property type="entry name" value="UCP016123"/>
    <property type="match status" value="1"/>
</dbReference>
<dbReference type="SUPFAM" id="SSF75217">
    <property type="entry name" value="alpha/beta knot"/>
    <property type="match status" value="1"/>
</dbReference>
<organism>
    <name type="scientific">Halobacterium salinarum (strain ATCC 700922 / JCM 11081 / NRC-1)</name>
    <name type="common">Halobacterium halobium</name>
    <dbReference type="NCBI Taxonomy" id="64091"/>
    <lineage>
        <taxon>Archaea</taxon>
        <taxon>Methanobacteriati</taxon>
        <taxon>Methanobacteriota</taxon>
        <taxon>Stenosarchaea group</taxon>
        <taxon>Halobacteria</taxon>
        <taxon>Halobacteriales</taxon>
        <taxon>Halobacteriaceae</taxon>
        <taxon>Halobacterium</taxon>
        <taxon>Halobacterium salinarum NRC-34001</taxon>
    </lineage>
</organism>
<keyword id="KW-0963">Cytoplasm</keyword>
<keyword id="KW-0489">Methyltransferase</keyword>
<keyword id="KW-1185">Reference proteome</keyword>
<keyword id="KW-0949">S-adenosyl-L-methionine</keyword>
<keyword id="KW-0808">Transferase</keyword>
<keyword id="KW-0819">tRNA processing</keyword>